<feature type="chain" id="PRO_1000187866" description="Beta-ketoacyl-[acyl-carrier-protein] synthase III">
    <location>
        <begin position="1"/>
        <end position="325"/>
    </location>
</feature>
<feature type="region of interest" description="ACP-binding" evidence="1">
    <location>
        <begin position="253"/>
        <end position="257"/>
    </location>
</feature>
<feature type="active site" evidence="1">
    <location>
        <position position="119"/>
    </location>
</feature>
<feature type="active site" evidence="1">
    <location>
        <position position="252"/>
    </location>
</feature>
<feature type="active site" evidence="1">
    <location>
        <position position="282"/>
    </location>
</feature>
<comment type="function">
    <text evidence="1">Catalyzes the condensation reaction of fatty acid synthesis by the addition to an acyl acceptor of two carbons from malonyl-ACP. Catalyzes the first condensation reaction which initiates fatty acid synthesis and may therefore play a role in governing the total rate of fatty acid production. Possesses both acetoacetyl-ACP synthase and acetyl transacylase activities. Its substrate specificity determines the biosynthesis of branched-chain and/or straight-chain of fatty acids.</text>
</comment>
<comment type="catalytic activity">
    <reaction evidence="1">
        <text>malonyl-[ACP] + acetyl-CoA + H(+) = 3-oxobutanoyl-[ACP] + CO2 + CoA</text>
        <dbReference type="Rhea" id="RHEA:12080"/>
        <dbReference type="Rhea" id="RHEA-COMP:9623"/>
        <dbReference type="Rhea" id="RHEA-COMP:9625"/>
        <dbReference type="ChEBI" id="CHEBI:15378"/>
        <dbReference type="ChEBI" id="CHEBI:16526"/>
        <dbReference type="ChEBI" id="CHEBI:57287"/>
        <dbReference type="ChEBI" id="CHEBI:57288"/>
        <dbReference type="ChEBI" id="CHEBI:78449"/>
        <dbReference type="ChEBI" id="CHEBI:78450"/>
        <dbReference type="EC" id="2.3.1.180"/>
    </reaction>
</comment>
<comment type="pathway">
    <text evidence="1">Lipid metabolism; fatty acid biosynthesis.</text>
</comment>
<comment type="subunit">
    <text evidence="1">Homodimer.</text>
</comment>
<comment type="subcellular location">
    <subcellularLocation>
        <location evidence="1">Cytoplasm</location>
    </subcellularLocation>
</comment>
<comment type="domain">
    <text evidence="1">The last Arg residue of the ACP-binding site is essential for the weak association between ACP/AcpP and FabH.</text>
</comment>
<comment type="similarity">
    <text evidence="1">Belongs to the thiolase-like superfamily. FabH family.</text>
</comment>
<name>FABH_ACIET</name>
<reference key="1">
    <citation type="submission" date="2009-01" db="EMBL/GenBank/DDBJ databases">
        <title>Complete sequence of Diaphorobacter sp. TPSY.</title>
        <authorList>
            <consortium name="US DOE Joint Genome Institute"/>
            <person name="Lucas S."/>
            <person name="Copeland A."/>
            <person name="Lapidus A."/>
            <person name="Glavina del Rio T."/>
            <person name="Tice H."/>
            <person name="Bruce D."/>
            <person name="Goodwin L."/>
            <person name="Pitluck S."/>
            <person name="Chertkov O."/>
            <person name="Brettin T."/>
            <person name="Detter J.C."/>
            <person name="Han C."/>
            <person name="Larimer F."/>
            <person name="Land M."/>
            <person name="Hauser L."/>
            <person name="Kyrpides N."/>
            <person name="Mikhailova N."/>
            <person name="Coates J.D."/>
        </authorList>
    </citation>
    <scope>NUCLEOTIDE SEQUENCE [LARGE SCALE GENOMIC DNA]</scope>
    <source>
        <strain>TPSY</strain>
    </source>
</reference>
<sequence length="325" mass="34281">MTRYSRITGTGSYLPPHRVTNDDLVAQLAQQGIETSDEWIVERTGIRARHFADRDVTSSDLALEASRRALEAAGCQAQDLDLIIVATSTPDMVFPSTACILQNKLGANGCPAFDVQAVCSGFVYALTVADAMIRSGGARRALVVGSEVFSRILDFNDRTTCVLFGDGAGAVVLEASEAPGILASDLHADGSHVGILCVPGNVYGGQILGDPLLKMDGQAVFKLAVGVLEKAARATLDKAGMTDADIDWLIPHQANIRIMQSTARKLKLSMDKVVVTVDQHGNTSAASIPLALDHGVRNGQVQPGQTVLLEGVGGGFTWGAVLLKM</sequence>
<accession>B9MDQ9</accession>
<keyword id="KW-0012">Acyltransferase</keyword>
<keyword id="KW-0963">Cytoplasm</keyword>
<keyword id="KW-0275">Fatty acid biosynthesis</keyword>
<keyword id="KW-0276">Fatty acid metabolism</keyword>
<keyword id="KW-0444">Lipid biosynthesis</keyword>
<keyword id="KW-0443">Lipid metabolism</keyword>
<keyword id="KW-0511">Multifunctional enzyme</keyword>
<keyword id="KW-1185">Reference proteome</keyword>
<keyword id="KW-0808">Transferase</keyword>
<gene>
    <name evidence="1" type="primary">fabH</name>
    <name type="ordered locus">Dtpsy_2633</name>
</gene>
<organism>
    <name type="scientific">Acidovorax ebreus (strain TPSY)</name>
    <name type="common">Diaphorobacter sp. (strain TPSY)</name>
    <dbReference type="NCBI Taxonomy" id="535289"/>
    <lineage>
        <taxon>Bacteria</taxon>
        <taxon>Pseudomonadati</taxon>
        <taxon>Pseudomonadota</taxon>
        <taxon>Betaproteobacteria</taxon>
        <taxon>Burkholderiales</taxon>
        <taxon>Comamonadaceae</taxon>
        <taxon>Diaphorobacter</taxon>
    </lineage>
</organism>
<dbReference type="EC" id="2.3.1.180" evidence="1"/>
<dbReference type="EMBL" id="CP001392">
    <property type="protein sequence ID" value="ACM34068.1"/>
    <property type="molecule type" value="Genomic_DNA"/>
</dbReference>
<dbReference type="RefSeq" id="WP_011806400.1">
    <property type="nucleotide sequence ID" value="NC_011992.1"/>
</dbReference>
<dbReference type="SMR" id="B9MDQ9"/>
<dbReference type="KEGG" id="dia:Dtpsy_2633"/>
<dbReference type="eggNOG" id="COG0332">
    <property type="taxonomic scope" value="Bacteria"/>
</dbReference>
<dbReference type="HOGENOM" id="CLU_039592_3_1_4"/>
<dbReference type="UniPathway" id="UPA00094"/>
<dbReference type="Proteomes" id="UP000000450">
    <property type="component" value="Chromosome"/>
</dbReference>
<dbReference type="GO" id="GO:0005737">
    <property type="term" value="C:cytoplasm"/>
    <property type="evidence" value="ECO:0007669"/>
    <property type="project" value="UniProtKB-SubCell"/>
</dbReference>
<dbReference type="GO" id="GO:0004315">
    <property type="term" value="F:3-oxoacyl-[acyl-carrier-protein] synthase activity"/>
    <property type="evidence" value="ECO:0007669"/>
    <property type="project" value="InterPro"/>
</dbReference>
<dbReference type="GO" id="GO:0033818">
    <property type="term" value="F:beta-ketoacyl-acyl-carrier-protein synthase III activity"/>
    <property type="evidence" value="ECO:0007669"/>
    <property type="project" value="UniProtKB-UniRule"/>
</dbReference>
<dbReference type="GO" id="GO:0006633">
    <property type="term" value="P:fatty acid biosynthetic process"/>
    <property type="evidence" value="ECO:0007669"/>
    <property type="project" value="UniProtKB-UniRule"/>
</dbReference>
<dbReference type="GO" id="GO:0044550">
    <property type="term" value="P:secondary metabolite biosynthetic process"/>
    <property type="evidence" value="ECO:0007669"/>
    <property type="project" value="TreeGrafter"/>
</dbReference>
<dbReference type="CDD" id="cd00830">
    <property type="entry name" value="KAS_III"/>
    <property type="match status" value="1"/>
</dbReference>
<dbReference type="FunFam" id="3.40.47.10:FF:000004">
    <property type="entry name" value="3-oxoacyl-[acyl-carrier-protein] synthase 3"/>
    <property type="match status" value="1"/>
</dbReference>
<dbReference type="Gene3D" id="3.40.47.10">
    <property type="match status" value="1"/>
</dbReference>
<dbReference type="HAMAP" id="MF_01815">
    <property type="entry name" value="FabH"/>
    <property type="match status" value="1"/>
</dbReference>
<dbReference type="InterPro" id="IPR013747">
    <property type="entry name" value="ACP_syn_III_C"/>
</dbReference>
<dbReference type="InterPro" id="IPR013751">
    <property type="entry name" value="ACP_syn_III_N"/>
</dbReference>
<dbReference type="InterPro" id="IPR004655">
    <property type="entry name" value="FabH"/>
</dbReference>
<dbReference type="InterPro" id="IPR016039">
    <property type="entry name" value="Thiolase-like"/>
</dbReference>
<dbReference type="NCBIfam" id="TIGR00747">
    <property type="entry name" value="fabH"/>
    <property type="match status" value="1"/>
</dbReference>
<dbReference type="NCBIfam" id="NF006829">
    <property type="entry name" value="PRK09352.1"/>
    <property type="match status" value="1"/>
</dbReference>
<dbReference type="PANTHER" id="PTHR34069">
    <property type="entry name" value="3-OXOACYL-[ACYL-CARRIER-PROTEIN] SYNTHASE 3"/>
    <property type="match status" value="1"/>
</dbReference>
<dbReference type="PANTHER" id="PTHR34069:SF2">
    <property type="entry name" value="BETA-KETOACYL-[ACYL-CARRIER-PROTEIN] SYNTHASE III"/>
    <property type="match status" value="1"/>
</dbReference>
<dbReference type="Pfam" id="PF08545">
    <property type="entry name" value="ACP_syn_III"/>
    <property type="match status" value="1"/>
</dbReference>
<dbReference type="Pfam" id="PF08541">
    <property type="entry name" value="ACP_syn_III_C"/>
    <property type="match status" value="1"/>
</dbReference>
<dbReference type="SUPFAM" id="SSF53901">
    <property type="entry name" value="Thiolase-like"/>
    <property type="match status" value="1"/>
</dbReference>
<proteinExistence type="inferred from homology"/>
<protein>
    <recommendedName>
        <fullName evidence="1">Beta-ketoacyl-[acyl-carrier-protein] synthase III</fullName>
        <shortName evidence="1">Beta-ketoacyl-ACP synthase III</shortName>
        <shortName evidence="1">KAS III</shortName>
        <ecNumber evidence="1">2.3.1.180</ecNumber>
    </recommendedName>
    <alternativeName>
        <fullName evidence="1">3-oxoacyl-[acyl-carrier-protein] synthase 3</fullName>
    </alternativeName>
    <alternativeName>
        <fullName evidence="1">3-oxoacyl-[acyl-carrier-protein] synthase III</fullName>
    </alternativeName>
</protein>
<evidence type="ECO:0000255" key="1">
    <source>
        <dbReference type="HAMAP-Rule" id="MF_01815"/>
    </source>
</evidence>